<reference key="1">
    <citation type="journal article" date="2008" name="PLoS ONE">
        <title>Comparative analysis of Acinetobacters: three genomes for three lifestyles.</title>
        <authorList>
            <person name="Vallenet D."/>
            <person name="Nordmann P."/>
            <person name="Barbe V."/>
            <person name="Poirel L."/>
            <person name="Mangenot S."/>
            <person name="Bataille E."/>
            <person name="Dossat C."/>
            <person name="Gas S."/>
            <person name="Kreimeyer A."/>
            <person name="Lenoble P."/>
            <person name="Oztas S."/>
            <person name="Poulain J."/>
            <person name="Segurens B."/>
            <person name="Robert C."/>
            <person name="Abergel C."/>
            <person name="Claverie J.-M."/>
            <person name="Raoult D."/>
            <person name="Medigue C."/>
            <person name="Weissenbach J."/>
            <person name="Cruveiller S."/>
        </authorList>
    </citation>
    <scope>NUCLEOTIDE SEQUENCE [LARGE SCALE GENOMIC DNA]</scope>
    <source>
        <strain>SDF</strain>
    </source>
</reference>
<protein>
    <recommendedName>
        <fullName evidence="1">Large ribosomal subunit protein uL6</fullName>
    </recommendedName>
    <alternativeName>
        <fullName evidence="2">50S ribosomal protein L6</fullName>
    </alternativeName>
</protein>
<organism>
    <name type="scientific">Acinetobacter baumannii (strain SDF)</name>
    <dbReference type="NCBI Taxonomy" id="509170"/>
    <lineage>
        <taxon>Bacteria</taxon>
        <taxon>Pseudomonadati</taxon>
        <taxon>Pseudomonadota</taxon>
        <taxon>Gammaproteobacteria</taxon>
        <taxon>Moraxellales</taxon>
        <taxon>Moraxellaceae</taxon>
        <taxon>Acinetobacter</taxon>
        <taxon>Acinetobacter calcoaceticus/baumannii complex</taxon>
    </lineage>
</organism>
<gene>
    <name evidence="1" type="primary">rplF</name>
    <name type="ordered locus">ABSDF0438</name>
</gene>
<dbReference type="EMBL" id="CU468230">
    <property type="protein sequence ID" value="CAO99829.1"/>
    <property type="molecule type" value="Genomic_DNA"/>
</dbReference>
<dbReference type="SMR" id="B0VQT3"/>
<dbReference type="KEGG" id="abm:ABSDF0438"/>
<dbReference type="HOGENOM" id="CLU_065464_1_2_6"/>
<dbReference type="Proteomes" id="UP000001741">
    <property type="component" value="Chromosome"/>
</dbReference>
<dbReference type="GO" id="GO:0022625">
    <property type="term" value="C:cytosolic large ribosomal subunit"/>
    <property type="evidence" value="ECO:0007669"/>
    <property type="project" value="TreeGrafter"/>
</dbReference>
<dbReference type="GO" id="GO:0019843">
    <property type="term" value="F:rRNA binding"/>
    <property type="evidence" value="ECO:0007669"/>
    <property type="project" value="UniProtKB-UniRule"/>
</dbReference>
<dbReference type="GO" id="GO:0003735">
    <property type="term" value="F:structural constituent of ribosome"/>
    <property type="evidence" value="ECO:0007669"/>
    <property type="project" value="InterPro"/>
</dbReference>
<dbReference type="GO" id="GO:0002181">
    <property type="term" value="P:cytoplasmic translation"/>
    <property type="evidence" value="ECO:0007669"/>
    <property type="project" value="TreeGrafter"/>
</dbReference>
<dbReference type="FunFam" id="3.90.930.12:FF:000001">
    <property type="entry name" value="50S ribosomal protein L6"/>
    <property type="match status" value="1"/>
</dbReference>
<dbReference type="FunFam" id="3.90.930.12:FF:000002">
    <property type="entry name" value="50S ribosomal protein L6"/>
    <property type="match status" value="1"/>
</dbReference>
<dbReference type="Gene3D" id="3.90.930.12">
    <property type="entry name" value="Ribosomal protein L6, alpha-beta domain"/>
    <property type="match status" value="2"/>
</dbReference>
<dbReference type="HAMAP" id="MF_01365_B">
    <property type="entry name" value="Ribosomal_uL6_B"/>
    <property type="match status" value="1"/>
</dbReference>
<dbReference type="InterPro" id="IPR000702">
    <property type="entry name" value="Ribosomal_uL6-like"/>
</dbReference>
<dbReference type="InterPro" id="IPR036789">
    <property type="entry name" value="Ribosomal_uL6-like_a/b-dom_sf"/>
</dbReference>
<dbReference type="InterPro" id="IPR020040">
    <property type="entry name" value="Ribosomal_uL6_a/b-dom"/>
</dbReference>
<dbReference type="InterPro" id="IPR019906">
    <property type="entry name" value="Ribosomal_uL6_bac-type"/>
</dbReference>
<dbReference type="InterPro" id="IPR002358">
    <property type="entry name" value="Ribosomal_uL6_CS"/>
</dbReference>
<dbReference type="NCBIfam" id="TIGR03654">
    <property type="entry name" value="L6_bact"/>
    <property type="match status" value="1"/>
</dbReference>
<dbReference type="PANTHER" id="PTHR11655">
    <property type="entry name" value="60S/50S RIBOSOMAL PROTEIN L6/L9"/>
    <property type="match status" value="1"/>
</dbReference>
<dbReference type="PANTHER" id="PTHR11655:SF14">
    <property type="entry name" value="LARGE RIBOSOMAL SUBUNIT PROTEIN UL6M"/>
    <property type="match status" value="1"/>
</dbReference>
<dbReference type="Pfam" id="PF00347">
    <property type="entry name" value="Ribosomal_L6"/>
    <property type="match status" value="2"/>
</dbReference>
<dbReference type="PIRSF" id="PIRSF002162">
    <property type="entry name" value="Ribosomal_L6"/>
    <property type="match status" value="1"/>
</dbReference>
<dbReference type="PRINTS" id="PR00059">
    <property type="entry name" value="RIBOSOMALL6"/>
</dbReference>
<dbReference type="SUPFAM" id="SSF56053">
    <property type="entry name" value="Ribosomal protein L6"/>
    <property type="match status" value="2"/>
</dbReference>
<dbReference type="PROSITE" id="PS00525">
    <property type="entry name" value="RIBOSOMAL_L6_1"/>
    <property type="match status" value="1"/>
</dbReference>
<keyword id="KW-0687">Ribonucleoprotein</keyword>
<keyword id="KW-0689">Ribosomal protein</keyword>
<keyword id="KW-0694">RNA-binding</keyword>
<keyword id="KW-0699">rRNA-binding</keyword>
<sequence length="177" mass="19125">MSRVAKAPVTVPNGVTVTQNGRQVEVKGSKGTLSFNLHALVELKQEEGKLQLAPAKESKDAWMQAGTARAVLNNLVKGVSEGFERKLQLVGVGYKAVVKGTVVNLNLGYSHPIDYALPEGVTAETPTATEIILKSANKQLLGQVAAEIRAYRSPEPYKGKGVRYSDEVILRKEAKKK</sequence>
<accession>B0VQT3</accession>
<evidence type="ECO:0000255" key="1">
    <source>
        <dbReference type="HAMAP-Rule" id="MF_01365"/>
    </source>
</evidence>
<evidence type="ECO:0000305" key="2"/>
<proteinExistence type="inferred from homology"/>
<name>RL6_ACIBS</name>
<comment type="function">
    <text evidence="1">This protein binds to the 23S rRNA, and is important in its secondary structure. It is located near the subunit interface in the base of the L7/L12 stalk, and near the tRNA binding site of the peptidyltransferase center.</text>
</comment>
<comment type="subunit">
    <text evidence="1">Part of the 50S ribosomal subunit.</text>
</comment>
<comment type="similarity">
    <text evidence="1">Belongs to the universal ribosomal protein uL6 family.</text>
</comment>
<feature type="chain" id="PRO_1000143931" description="Large ribosomal subunit protein uL6">
    <location>
        <begin position="1"/>
        <end position="177"/>
    </location>
</feature>